<feature type="chain" id="PRO_1000164662" description="Protein-methionine-sulfoxide reductase heme-binding subunit MsrQ">
    <location>
        <begin position="1"/>
        <end position="211"/>
    </location>
</feature>
<feature type="transmembrane region" description="Helical" evidence="1">
    <location>
        <begin position="10"/>
        <end position="30"/>
    </location>
</feature>
<feature type="transmembrane region" description="Helical" evidence="1">
    <location>
        <begin position="82"/>
        <end position="102"/>
    </location>
</feature>
<feature type="transmembrane region" description="Helical" evidence="1">
    <location>
        <begin position="116"/>
        <end position="136"/>
    </location>
</feature>
<feature type="transmembrane region" description="Helical" evidence="1">
    <location>
        <begin position="153"/>
        <end position="173"/>
    </location>
</feature>
<feature type="transmembrane region" description="Helical" evidence="1">
    <location>
        <begin position="178"/>
        <end position="198"/>
    </location>
</feature>
<evidence type="ECO:0000255" key="1">
    <source>
        <dbReference type="HAMAP-Rule" id="MF_01207"/>
    </source>
</evidence>
<accession>B7L8Y9</accession>
<keyword id="KW-0997">Cell inner membrane</keyword>
<keyword id="KW-1003">Cell membrane</keyword>
<keyword id="KW-0249">Electron transport</keyword>
<keyword id="KW-0285">Flavoprotein</keyword>
<keyword id="KW-0288">FMN</keyword>
<keyword id="KW-0349">Heme</keyword>
<keyword id="KW-0408">Iron</keyword>
<keyword id="KW-0472">Membrane</keyword>
<keyword id="KW-0479">Metal-binding</keyword>
<keyword id="KW-1185">Reference proteome</keyword>
<keyword id="KW-0812">Transmembrane</keyword>
<keyword id="KW-1133">Transmembrane helix</keyword>
<keyword id="KW-0813">Transport</keyword>
<reference key="1">
    <citation type="journal article" date="2009" name="PLoS Genet.">
        <title>Organised genome dynamics in the Escherichia coli species results in highly diverse adaptive paths.</title>
        <authorList>
            <person name="Touchon M."/>
            <person name="Hoede C."/>
            <person name="Tenaillon O."/>
            <person name="Barbe V."/>
            <person name="Baeriswyl S."/>
            <person name="Bidet P."/>
            <person name="Bingen E."/>
            <person name="Bonacorsi S."/>
            <person name="Bouchier C."/>
            <person name="Bouvet O."/>
            <person name="Calteau A."/>
            <person name="Chiapello H."/>
            <person name="Clermont O."/>
            <person name="Cruveiller S."/>
            <person name="Danchin A."/>
            <person name="Diard M."/>
            <person name="Dossat C."/>
            <person name="Karoui M.E."/>
            <person name="Frapy E."/>
            <person name="Garry L."/>
            <person name="Ghigo J.M."/>
            <person name="Gilles A.M."/>
            <person name="Johnson J."/>
            <person name="Le Bouguenec C."/>
            <person name="Lescat M."/>
            <person name="Mangenot S."/>
            <person name="Martinez-Jehanne V."/>
            <person name="Matic I."/>
            <person name="Nassif X."/>
            <person name="Oztas S."/>
            <person name="Petit M.A."/>
            <person name="Pichon C."/>
            <person name="Rouy Z."/>
            <person name="Ruf C.S."/>
            <person name="Schneider D."/>
            <person name="Tourret J."/>
            <person name="Vacherie B."/>
            <person name="Vallenet D."/>
            <person name="Medigue C."/>
            <person name="Rocha E.P.C."/>
            <person name="Denamur E."/>
        </authorList>
    </citation>
    <scope>NUCLEOTIDE SEQUENCE [LARGE SCALE GENOMIC DNA]</scope>
    <source>
        <strain>55989 / EAEC</strain>
    </source>
</reference>
<proteinExistence type="inferred from homology"/>
<gene>
    <name evidence="1" type="primary">msrQ</name>
    <name type="ordered locus">EC55989_2198</name>
</gene>
<sequence>MRLTAKQVTWLKVCLHLAGLLPFLWLVWAINHGGLGADPVKDIQHFTGRTALKFLLATLLITPLARYAKQPLLIRTRRLLGLWCFAWATLHLTSYALLELGVNNLALLGKELITRPYLTLGIISWVILLALAFTSTQAMQRKLGKHWQQLHNFVYLVAILAPIHYLWSVKIISPQPLIYAGLAVLLLALRYKKLLSLFNRLRKQVHNKLSV</sequence>
<organism>
    <name type="scientific">Escherichia coli (strain 55989 / EAEC)</name>
    <dbReference type="NCBI Taxonomy" id="585055"/>
    <lineage>
        <taxon>Bacteria</taxon>
        <taxon>Pseudomonadati</taxon>
        <taxon>Pseudomonadota</taxon>
        <taxon>Gammaproteobacteria</taxon>
        <taxon>Enterobacterales</taxon>
        <taxon>Enterobacteriaceae</taxon>
        <taxon>Escherichia</taxon>
    </lineage>
</organism>
<comment type="function">
    <text evidence="1">Part of the MsrPQ system that repairs oxidized periplasmic proteins containing methionine sulfoxide residues (Met-O), using respiratory chain electrons. Thus protects these proteins from oxidative-stress damage caused by reactive species of oxygen and chlorine generated by the host defense mechanisms. MsrPQ is essential for the maintenance of envelope integrity under bleach stress, rescuing a wide series of structurally unrelated periplasmic proteins from methionine oxidation, including the primary periplasmic chaperone SurA and the lipoprotein Pal. MsrQ provides electrons for reduction to the reductase catalytic subunit MsrP, using the quinone pool of the respiratory chain.</text>
</comment>
<comment type="cofactor">
    <cofactor evidence="1">
        <name>FMN</name>
        <dbReference type="ChEBI" id="CHEBI:58210"/>
    </cofactor>
    <text evidence="1">Binds 1 FMN per subunit.</text>
</comment>
<comment type="cofactor">
    <cofactor evidence="1">
        <name>heme b</name>
        <dbReference type="ChEBI" id="CHEBI:60344"/>
    </cofactor>
    <text evidence="1">Binds 1 heme b (iron(II)-protoporphyrin IX) group per subunit.</text>
</comment>
<comment type="subunit">
    <text evidence="1">Heterodimer of a catalytic subunit (MsrP) and a heme-binding subunit (MsrQ).</text>
</comment>
<comment type="subcellular location">
    <subcellularLocation>
        <location evidence="1">Cell inner membrane</location>
        <topology evidence="1">Multi-pass membrane protein</topology>
    </subcellularLocation>
</comment>
<comment type="similarity">
    <text evidence="1">Belongs to the MsrQ family.</text>
</comment>
<name>MSRQ_ECO55</name>
<dbReference type="EMBL" id="CU928145">
    <property type="protein sequence ID" value="CAU98071.1"/>
    <property type="molecule type" value="Genomic_DNA"/>
</dbReference>
<dbReference type="RefSeq" id="WP_001240090.1">
    <property type="nucleotide sequence ID" value="NC_011748.1"/>
</dbReference>
<dbReference type="SMR" id="B7L8Y9"/>
<dbReference type="KEGG" id="eck:EC55989_2198"/>
<dbReference type="HOGENOM" id="CLU_080662_0_1_6"/>
<dbReference type="Proteomes" id="UP000000746">
    <property type="component" value="Chromosome"/>
</dbReference>
<dbReference type="GO" id="GO:0005886">
    <property type="term" value="C:plasma membrane"/>
    <property type="evidence" value="ECO:0007669"/>
    <property type="project" value="UniProtKB-SubCell"/>
</dbReference>
<dbReference type="GO" id="GO:0009055">
    <property type="term" value="F:electron transfer activity"/>
    <property type="evidence" value="ECO:0007669"/>
    <property type="project" value="UniProtKB-UniRule"/>
</dbReference>
<dbReference type="GO" id="GO:0010181">
    <property type="term" value="F:FMN binding"/>
    <property type="evidence" value="ECO:0007669"/>
    <property type="project" value="UniProtKB-UniRule"/>
</dbReference>
<dbReference type="GO" id="GO:0020037">
    <property type="term" value="F:heme binding"/>
    <property type="evidence" value="ECO:0007669"/>
    <property type="project" value="UniProtKB-UniRule"/>
</dbReference>
<dbReference type="GO" id="GO:0046872">
    <property type="term" value="F:metal ion binding"/>
    <property type="evidence" value="ECO:0007669"/>
    <property type="project" value="UniProtKB-KW"/>
</dbReference>
<dbReference type="GO" id="GO:0016679">
    <property type="term" value="F:oxidoreductase activity, acting on diphenols and related substances as donors"/>
    <property type="evidence" value="ECO:0007669"/>
    <property type="project" value="TreeGrafter"/>
</dbReference>
<dbReference type="GO" id="GO:0030091">
    <property type="term" value="P:protein repair"/>
    <property type="evidence" value="ECO:0007669"/>
    <property type="project" value="UniProtKB-UniRule"/>
</dbReference>
<dbReference type="HAMAP" id="MF_01207">
    <property type="entry name" value="MsrQ"/>
    <property type="match status" value="1"/>
</dbReference>
<dbReference type="InterPro" id="IPR013130">
    <property type="entry name" value="Fe3_Rdtase_TM_dom"/>
</dbReference>
<dbReference type="InterPro" id="IPR022837">
    <property type="entry name" value="MsrQ-like"/>
</dbReference>
<dbReference type="NCBIfam" id="NF003830">
    <property type="entry name" value="PRK05419.1-1"/>
    <property type="match status" value="1"/>
</dbReference>
<dbReference type="NCBIfam" id="NF003831">
    <property type="entry name" value="PRK05419.1-2"/>
    <property type="match status" value="1"/>
</dbReference>
<dbReference type="NCBIfam" id="NF003832">
    <property type="entry name" value="PRK05419.1-4"/>
    <property type="match status" value="1"/>
</dbReference>
<dbReference type="PANTHER" id="PTHR36964">
    <property type="entry name" value="PROTEIN-METHIONINE-SULFOXIDE REDUCTASE HEME-BINDING SUBUNIT MSRQ"/>
    <property type="match status" value="1"/>
</dbReference>
<dbReference type="PANTHER" id="PTHR36964:SF1">
    <property type="entry name" value="PROTEIN-METHIONINE-SULFOXIDE REDUCTASE HEME-BINDING SUBUNIT MSRQ"/>
    <property type="match status" value="1"/>
</dbReference>
<dbReference type="Pfam" id="PF01794">
    <property type="entry name" value="Ferric_reduct"/>
    <property type="match status" value="1"/>
</dbReference>
<protein>
    <recommendedName>
        <fullName evidence="1">Protein-methionine-sulfoxide reductase heme-binding subunit MsrQ</fullName>
    </recommendedName>
    <alternativeName>
        <fullName evidence="1">Flavocytochrome MsrQ</fullName>
    </alternativeName>
</protein>